<reference key="1">
    <citation type="journal article" date="2005" name="Genome Res.">
        <title>Living with two extremes: conclusions from the genome sequence of Natronomonas pharaonis.</title>
        <authorList>
            <person name="Falb M."/>
            <person name="Pfeiffer F."/>
            <person name="Palm P."/>
            <person name="Rodewald K."/>
            <person name="Hickmann V."/>
            <person name="Tittor J."/>
            <person name="Oesterhelt D."/>
        </authorList>
    </citation>
    <scope>NUCLEOTIDE SEQUENCE [LARGE SCALE GENOMIC DNA]</scope>
    <source>
        <strain>ATCC 35678 / DSM 2160 / CIP 103997 / JCM 8858 / NBRC 14720 / NCIMB 2260 / Gabara</strain>
    </source>
</reference>
<gene>
    <name evidence="1" type="primary">pyrE</name>
    <name type="ordered locus">NP_1256A</name>
</gene>
<name>PYRE_NATPD</name>
<protein>
    <recommendedName>
        <fullName evidence="1">Orotate phosphoribosyltransferase</fullName>
        <shortName evidence="1">OPRT</shortName>
        <shortName evidence="1">OPRTase</shortName>
        <ecNumber evidence="1">2.4.2.10</ecNumber>
    </recommendedName>
</protein>
<accession>Q3IT15</accession>
<dbReference type="EC" id="2.4.2.10" evidence="1"/>
<dbReference type="EMBL" id="CR936257">
    <property type="protein sequence ID" value="CAI48719.1"/>
    <property type="molecule type" value="Genomic_DNA"/>
</dbReference>
<dbReference type="RefSeq" id="WP_011322355.1">
    <property type="nucleotide sequence ID" value="NC_007426.1"/>
</dbReference>
<dbReference type="SMR" id="Q3IT15"/>
<dbReference type="STRING" id="348780.NP_1256A"/>
<dbReference type="EnsemblBacteria" id="CAI48719">
    <property type="protein sequence ID" value="CAI48719"/>
    <property type="gene ID" value="NP_1256A"/>
</dbReference>
<dbReference type="GeneID" id="3703084"/>
<dbReference type="KEGG" id="nph:NP_1256A"/>
<dbReference type="eggNOG" id="arCOG00029">
    <property type="taxonomic scope" value="Archaea"/>
</dbReference>
<dbReference type="HOGENOM" id="CLU_074878_2_0_2"/>
<dbReference type="OrthoDB" id="9089at2157"/>
<dbReference type="UniPathway" id="UPA00070">
    <property type="reaction ID" value="UER00119"/>
</dbReference>
<dbReference type="Proteomes" id="UP000002698">
    <property type="component" value="Chromosome"/>
</dbReference>
<dbReference type="GO" id="GO:0000287">
    <property type="term" value="F:magnesium ion binding"/>
    <property type="evidence" value="ECO:0007669"/>
    <property type="project" value="UniProtKB-UniRule"/>
</dbReference>
<dbReference type="GO" id="GO:0004588">
    <property type="term" value="F:orotate phosphoribosyltransferase activity"/>
    <property type="evidence" value="ECO:0007669"/>
    <property type="project" value="UniProtKB-UniRule"/>
</dbReference>
<dbReference type="GO" id="GO:0044205">
    <property type="term" value="P:'de novo' UMP biosynthetic process"/>
    <property type="evidence" value="ECO:0007669"/>
    <property type="project" value="UniProtKB-UniRule"/>
</dbReference>
<dbReference type="GO" id="GO:0019856">
    <property type="term" value="P:pyrimidine nucleobase biosynthetic process"/>
    <property type="evidence" value="ECO:0007669"/>
    <property type="project" value="TreeGrafter"/>
</dbReference>
<dbReference type="CDD" id="cd06223">
    <property type="entry name" value="PRTases_typeI"/>
    <property type="match status" value="1"/>
</dbReference>
<dbReference type="Gene3D" id="3.40.50.2020">
    <property type="match status" value="1"/>
</dbReference>
<dbReference type="HAMAP" id="MF_01208">
    <property type="entry name" value="PyrE"/>
    <property type="match status" value="1"/>
</dbReference>
<dbReference type="InterPro" id="IPR023031">
    <property type="entry name" value="OPRT"/>
</dbReference>
<dbReference type="InterPro" id="IPR004467">
    <property type="entry name" value="Or_phspho_trans_dom"/>
</dbReference>
<dbReference type="InterPro" id="IPR000836">
    <property type="entry name" value="PRibTrfase_dom"/>
</dbReference>
<dbReference type="InterPro" id="IPR029057">
    <property type="entry name" value="PRTase-like"/>
</dbReference>
<dbReference type="NCBIfam" id="TIGR00336">
    <property type="entry name" value="pyrE"/>
    <property type="match status" value="1"/>
</dbReference>
<dbReference type="PANTHER" id="PTHR19278">
    <property type="entry name" value="OROTATE PHOSPHORIBOSYLTRANSFERASE"/>
    <property type="match status" value="1"/>
</dbReference>
<dbReference type="PANTHER" id="PTHR19278:SF9">
    <property type="entry name" value="URIDINE 5'-MONOPHOSPHATE SYNTHASE"/>
    <property type="match status" value="1"/>
</dbReference>
<dbReference type="Pfam" id="PF00156">
    <property type="entry name" value="Pribosyltran"/>
    <property type="match status" value="1"/>
</dbReference>
<dbReference type="SUPFAM" id="SSF53271">
    <property type="entry name" value="PRTase-like"/>
    <property type="match status" value="1"/>
</dbReference>
<organism>
    <name type="scientific">Natronomonas pharaonis (strain ATCC 35678 / DSM 2160 / CIP 103997 / JCM 8858 / NBRC 14720 / NCIMB 2260 / Gabara)</name>
    <name type="common">Halobacterium pharaonis</name>
    <dbReference type="NCBI Taxonomy" id="348780"/>
    <lineage>
        <taxon>Archaea</taxon>
        <taxon>Methanobacteriati</taxon>
        <taxon>Methanobacteriota</taxon>
        <taxon>Stenosarchaea group</taxon>
        <taxon>Halobacteria</taxon>
        <taxon>Halobacteriales</taxon>
        <taxon>Haloarculaceae</taxon>
        <taxon>Natronomonas</taxon>
    </lineage>
</organism>
<sequence>MANQELIDALRDAEAVKFGEFELSHGGTSEYYVDKYVFETDPGCLRQIADAFADRVGDAKLAGVALGAVPLVAATAVETDSPYVIVRKQKKEYGTGNQIEGDFDAGEEVVVLEDIATTGQSAIDAVEALREAGATVDRVIVVVDREEGARENLAEHDIELESLVTASDLLADR</sequence>
<feature type="chain" id="PRO_1000073108" description="Orotate phosphoribosyltransferase">
    <location>
        <begin position="1"/>
        <end position="173"/>
    </location>
</feature>
<feature type="binding site" evidence="1">
    <location>
        <position position="87"/>
    </location>
    <ligand>
        <name>5-phospho-alpha-D-ribose 1-diphosphate</name>
        <dbReference type="ChEBI" id="CHEBI:58017"/>
        <note>ligand shared between dimeric partners</note>
    </ligand>
</feature>
<feature type="binding site" description="in other chain" evidence="1">
    <location>
        <position position="88"/>
    </location>
    <ligand>
        <name>5-phospho-alpha-D-ribose 1-diphosphate</name>
        <dbReference type="ChEBI" id="CHEBI:58017"/>
        <note>ligand shared between dimeric partners</note>
    </ligand>
</feature>
<feature type="binding site" evidence="1">
    <location>
        <position position="91"/>
    </location>
    <ligand>
        <name>5-phospho-alpha-D-ribose 1-diphosphate</name>
        <dbReference type="ChEBI" id="CHEBI:58017"/>
        <note>ligand shared between dimeric partners</note>
    </ligand>
</feature>
<feature type="binding site" description="in other chain" evidence="1">
    <location>
        <begin position="113"/>
        <end position="121"/>
    </location>
    <ligand>
        <name>5-phospho-alpha-D-ribose 1-diphosphate</name>
        <dbReference type="ChEBI" id="CHEBI:58017"/>
        <note>ligand shared between dimeric partners</note>
    </ligand>
</feature>
<feature type="binding site" evidence="1">
    <location>
        <position position="117"/>
    </location>
    <ligand>
        <name>orotate</name>
        <dbReference type="ChEBI" id="CHEBI:30839"/>
    </ligand>
</feature>
<feature type="binding site" evidence="1">
    <location>
        <position position="145"/>
    </location>
    <ligand>
        <name>orotate</name>
        <dbReference type="ChEBI" id="CHEBI:30839"/>
    </ligand>
</feature>
<proteinExistence type="inferred from homology"/>
<comment type="function">
    <text evidence="1">Catalyzes the transfer of a ribosyl phosphate group from 5-phosphoribose 1-diphosphate to orotate, leading to the formation of orotidine monophosphate (OMP).</text>
</comment>
<comment type="catalytic activity">
    <reaction evidence="1">
        <text>orotidine 5'-phosphate + diphosphate = orotate + 5-phospho-alpha-D-ribose 1-diphosphate</text>
        <dbReference type="Rhea" id="RHEA:10380"/>
        <dbReference type="ChEBI" id="CHEBI:30839"/>
        <dbReference type="ChEBI" id="CHEBI:33019"/>
        <dbReference type="ChEBI" id="CHEBI:57538"/>
        <dbReference type="ChEBI" id="CHEBI:58017"/>
        <dbReference type="EC" id="2.4.2.10"/>
    </reaction>
</comment>
<comment type="cofactor">
    <cofactor evidence="1">
        <name>Mg(2+)</name>
        <dbReference type="ChEBI" id="CHEBI:18420"/>
    </cofactor>
</comment>
<comment type="pathway">
    <text evidence="1">Pyrimidine metabolism; UMP biosynthesis via de novo pathway; UMP from orotate: step 1/2.</text>
</comment>
<comment type="subunit">
    <text evidence="1">Homodimer.</text>
</comment>
<comment type="similarity">
    <text evidence="1">Belongs to the purine/pyrimidine phosphoribosyltransferase family. PyrE subfamily.</text>
</comment>
<evidence type="ECO:0000255" key="1">
    <source>
        <dbReference type="HAMAP-Rule" id="MF_01208"/>
    </source>
</evidence>
<keyword id="KW-0328">Glycosyltransferase</keyword>
<keyword id="KW-0460">Magnesium</keyword>
<keyword id="KW-0665">Pyrimidine biosynthesis</keyword>
<keyword id="KW-1185">Reference proteome</keyword>
<keyword id="KW-0808">Transferase</keyword>